<dbReference type="EC" id="5.3.1.12" evidence="1"/>
<dbReference type="EMBL" id="AL513382">
    <property type="protein sequence ID" value="CAD02969.1"/>
    <property type="molecule type" value="Genomic_DNA"/>
</dbReference>
<dbReference type="EMBL" id="AE014613">
    <property type="protein sequence ID" value="AAO70604.1"/>
    <property type="molecule type" value="Genomic_DNA"/>
</dbReference>
<dbReference type="RefSeq" id="NP_457532.1">
    <property type="nucleotide sequence ID" value="NC_003198.1"/>
</dbReference>
<dbReference type="RefSeq" id="WP_000190176.1">
    <property type="nucleotide sequence ID" value="NZ_WSUR01000003.1"/>
</dbReference>
<dbReference type="SMR" id="Q8Z3R7"/>
<dbReference type="STRING" id="220341.gene:17587172"/>
<dbReference type="KEGG" id="stt:t3058"/>
<dbReference type="KEGG" id="sty:STY3308"/>
<dbReference type="PATRIC" id="fig|220341.7.peg.3368"/>
<dbReference type="eggNOG" id="COG1904">
    <property type="taxonomic scope" value="Bacteria"/>
</dbReference>
<dbReference type="HOGENOM" id="CLU_044465_1_0_6"/>
<dbReference type="OMA" id="IWHQCNE"/>
<dbReference type="OrthoDB" id="9766564at2"/>
<dbReference type="UniPathway" id="UPA00246"/>
<dbReference type="Proteomes" id="UP000000541">
    <property type="component" value="Chromosome"/>
</dbReference>
<dbReference type="Proteomes" id="UP000002670">
    <property type="component" value="Chromosome"/>
</dbReference>
<dbReference type="GO" id="GO:0008880">
    <property type="term" value="F:glucuronate isomerase activity"/>
    <property type="evidence" value="ECO:0007669"/>
    <property type="project" value="UniProtKB-UniRule"/>
</dbReference>
<dbReference type="GO" id="GO:0019698">
    <property type="term" value="P:D-galacturonate catabolic process"/>
    <property type="evidence" value="ECO:0007669"/>
    <property type="project" value="TreeGrafter"/>
</dbReference>
<dbReference type="GO" id="GO:0042840">
    <property type="term" value="P:D-glucuronate catabolic process"/>
    <property type="evidence" value="ECO:0007669"/>
    <property type="project" value="TreeGrafter"/>
</dbReference>
<dbReference type="Gene3D" id="3.20.20.140">
    <property type="entry name" value="Metal-dependent hydrolases"/>
    <property type="match status" value="1"/>
</dbReference>
<dbReference type="Gene3D" id="1.10.2020.10">
    <property type="entry name" value="uronate isomerase, domain 2, chain A"/>
    <property type="match status" value="1"/>
</dbReference>
<dbReference type="HAMAP" id="MF_00675">
    <property type="entry name" value="UxaC"/>
    <property type="match status" value="1"/>
</dbReference>
<dbReference type="InterPro" id="IPR032466">
    <property type="entry name" value="Metal_Hydrolase"/>
</dbReference>
<dbReference type="InterPro" id="IPR003766">
    <property type="entry name" value="Uronate_isomerase"/>
</dbReference>
<dbReference type="NCBIfam" id="NF002794">
    <property type="entry name" value="PRK02925.1"/>
    <property type="match status" value="1"/>
</dbReference>
<dbReference type="PANTHER" id="PTHR30068">
    <property type="entry name" value="URONATE ISOMERASE"/>
    <property type="match status" value="1"/>
</dbReference>
<dbReference type="PANTHER" id="PTHR30068:SF4">
    <property type="entry name" value="URONATE ISOMERASE"/>
    <property type="match status" value="1"/>
</dbReference>
<dbReference type="Pfam" id="PF02614">
    <property type="entry name" value="UxaC"/>
    <property type="match status" value="1"/>
</dbReference>
<dbReference type="SUPFAM" id="SSF51556">
    <property type="entry name" value="Metallo-dependent hydrolases"/>
    <property type="match status" value="1"/>
</dbReference>
<keyword id="KW-0413">Isomerase</keyword>
<proteinExistence type="inferred from homology"/>
<sequence length="470" mass="53492">MATFMTEDFLLKNDIARTLYHKYAAPMPIYDFHCHLSPQEIADDRRFDNLGQIWLEGDHYKWRALRSAGVDESLITGKETSDYEKYMAWANTVPKTLGNPLYHWTHLELRRPFGITGTLFGPDTAESIWTQCNEKLATPAFSARGIMQQMNVRMVGTTDDPIDSLEYHHQIAADDSIDIEVAPSWRPDKVFKIELDGFVDYLGKLEAAADVSITRFDDLRQALTRRLDHFAACGCRASDHGIETLRFAPVPDDAQLDAILGKRLAGETLSELEIAQFTTAVLVWLGRQYAARGWVMQLHIGAIRNNNTRMFRLLGPDTGFDSIGDNNISWALSRLLDSMDVTNELPKTILYCLNPRDNEVLATMIGNFQGPGIAGKVQFGSGWWFNDQKDGMLRQLEQLSQMGLLSQFVGMLTDSRSFLSYTRHEYFRRILCNLLGQWAQDGEIPDDEAMLSRMVQDICFNNAQRYFTIK</sequence>
<gene>
    <name evidence="1" type="primary">uxaC</name>
    <name type="ordered locus">STY3308</name>
    <name type="ordered locus">t3058</name>
</gene>
<comment type="catalytic activity">
    <reaction evidence="1">
        <text>D-glucuronate = D-fructuronate</text>
        <dbReference type="Rhea" id="RHEA:13049"/>
        <dbReference type="ChEBI" id="CHEBI:58720"/>
        <dbReference type="ChEBI" id="CHEBI:59863"/>
        <dbReference type="EC" id="5.3.1.12"/>
    </reaction>
</comment>
<comment type="catalytic activity">
    <reaction evidence="1">
        <text>aldehydo-D-galacturonate = keto-D-tagaturonate</text>
        <dbReference type="Rhea" id="RHEA:27702"/>
        <dbReference type="ChEBI" id="CHEBI:12952"/>
        <dbReference type="ChEBI" id="CHEBI:17886"/>
        <dbReference type="EC" id="5.3.1.12"/>
    </reaction>
</comment>
<comment type="pathway">
    <text evidence="1">Carbohydrate metabolism; pentose and glucuronate interconversion.</text>
</comment>
<comment type="similarity">
    <text evidence="1">Belongs to the metallo-dependent hydrolases superfamily. Uronate isomerase family.</text>
</comment>
<evidence type="ECO:0000255" key="1">
    <source>
        <dbReference type="HAMAP-Rule" id="MF_00675"/>
    </source>
</evidence>
<feature type="chain" id="PRO_0000172784" description="Uronate isomerase">
    <location>
        <begin position="1"/>
        <end position="470"/>
    </location>
</feature>
<organism>
    <name type="scientific">Salmonella typhi</name>
    <dbReference type="NCBI Taxonomy" id="90370"/>
    <lineage>
        <taxon>Bacteria</taxon>
        <taxon>Pseudomonadati</taxon>
        <taxon>Pseudomonadota</taxon>
        <taxon>Gammaproteobacteria</taxon>
        <taxon>Enterobacterales</taxon>
        <taxon>Enterobacteriaceae</taxon>
        <taxon>Salmonella</taxon>
    </lineage>
</organism>
<reference key="1">
    <citation type="journal article" date="2001" name="Nature">
        <title>Complete genome sequence of a multiple drug resistant Salmonella enterica serovar Typhi CT18.</title>
        <authorList>
            <person name="Parkhill J."/>
            <person name="Dougan G."/>
            <person name="James K.D."/>
            <person name="Thomson N.R."/>
            <person name="Pickard D."/>
            <person name="Wain J."/>
            <person name="Churcher C.M."/>
            <person name="Mungall K.L."/>
            <person name="Bentley S.D."/>
            <person name="Holden M.T.G."/>
            <person name="Sebaihia M."/>
            <person name="Baker S."/>
            <person name="Basham D."/>
            <person name="Brooks K."/>
            <person name="Chillingworth T."/>
            <person name="Connerton P."/>
            <person name="Cronin A."/>
            <person name="Davis P."/>
            <person name="Davies R.M."/>
            <person name="Dowd L."/>
            <person name="White N."/>
            <person name="Farrar J."/>
            <person name="Feltwell T."/>
            <person name="Hamlin N."/>
            <person name="Haque A."/>
            <person name="Hien T.T."/>
            <person name="Holroyd S."/>
            <person name="Jagels K."/>
            <person name="Krogh A."/>
            <person name="Larsen T.S."/>
            <person name="Leather S."/>
            <person name="Moule S."/>
            <person name="O'Gaora P."/>
            <person name="Parry C."/>
            <person name="Quail M.A."/>
            <person name="Rutherford K.M."/>
            <person name="Simmonds M."/>
            <person name="Skelton J."/>
            <person name="Stevens K."/>
            <person name="Whitehead S."/>
            <person name="Barrell B.G."/>
        </authorList>
    </citation>
    <scope>NUCLEOTIDE SEQUENCE [LARGE SCALE GENOMIC DNA]</scope>
    <source>
        <strain>CT18</strain>
    </source>
</reference>
<reference key="2">
    <citation type="journal article" date="2003" name="J. Bacteriol.">
        <title>Comparative genomics of Salmonella enterica serovar Typhi strains Ty2 and CT18.</title>
        <authorList>
            <person name="Deng W."/>
            <person name="Liou S.-R."/>
            <person name="Plunkett G. III"/>
            <person name="Mayhew G.F."/>
            <person name="Rose D.J."/>
            <person name="Burland V."/>
            <person name="Kodoyianni V."/>
            <person name="Schwartz D.C."/>
            <person name="Blattner F.R."/>
        </authorList>
    </citation>
    <scope>NUCLEOTIDE SEQUENCE [LARGE SCALE GENOMIC DNA]</scope>
    <source>
        <strain>ATCC 700931 / Ty2</strain>
    </source>
</reference>
<protein>
    <recommendedName>
        <fullName evidence="1">Uronate isomerase</fullName>
        <ecNumber evidence="1">5.3.1.12</ecNumber>
    </recommendedName>
    <alternativeName>
        <fullName evidence="1">Glucuronate isomerase</fullName>
    </alternativeName>
    <alternativeName>
        <fullName evidence="1">Uronic isomerase</fullName>
    </alternativeName>
</protein>
<name>UXAC_SALTI</name>
<accession>Q8Z3R7</accession>